<accession>Q1R7C6</accession>
<dbReference type="EC" id="2.1.2.10" evidence="1"/>
<dbReference type="EMBL" id="CP000243">
    <property type="protein sequence ID" value="ABE08738.1"/>
    <property type="molecule type" value="Genomic_DNA"/>
</dbReference>
<dbReference type="RefSeq" id="WP_000068706.1">
    <property type="nucleotide sequence ID" value="NZ_CP064825.1"/>
</dbReference>
<dbReference type="SMR" id="Q1R7C6"/>
<dbReference type="GeneID" id="75173005"/>
<dbReference type="KEGG" id="eci:UTI89_C3290"/>
<dbReference type="HOGENOM" id="CLU_007884_10_2_6"/>
<dbReference type="Proteomes" id="UP000001952">
    <property type="component" value="Chromosome"/>
</dbReference>
<dbReference type="GO" id="GO:0005829">
    <property type="term" value="C:cytosol"/>
    <property type="evidence" value="ECO:0007669"/>
    <property type="project" value="TreeGrafter"/>
</dbReference>
<dbReference type="GO" id="GO:0005960">
    <property type="term" value="C:glycine cleavage complex"/>
    <property type="evidence" value="ECO:0007669"/>
    <property type="project" value="InterPro"/>
</dbReference>
<dbReference type="GO" id="GO:0004047">
    <property type="term" value="F:aminomethyltransferase activity"/>
    <property type="evidence" value="ECO:0007669"/>
    <property type="project" value="UniProtKB-UniRule"/>
</dbReference>
<dbReference type="GO" id="GO:0008483">
    <property type="term" value="F:transaminase activity"/>
    <property type="evidence" value="ECO:0007669"/>
    <property type="project" value="UniProtKB-KW"/>
</dbReference>
<dbReference type="GO" id="GO:0019464">
    <property type="term" value="P:glycine decarboxylation via glycine cleavage system"/>
    <property type="evidence" value="ECO:0007669"/>
    <property type="project" value="UniProtKB-UniRule"/>
</dbReference>
<dbReference type="FunFam" id="2.40.30.110:FF:000001">
    <property type="entry name" value="Aminomethyltransferase"/>
    <property type="match status" value="1"/>
</dbReference>
<dbReference type="FunFam" id="3.30.70.1400:FF:000001">
    <property type="entry name" value="Aminomethyltransferase"/>
    <property type="match status" value="1"/>
</dbReference>
<dbReference type="FunFam" id="4.10.1250.10:FF:000001">
    <property type="entry name" value="Aminomethyltransferase"/>
    <property type="match status" value="1"/>
</dbReference>
<dbReference type="Gene3D" id="2.40.30.110">
    <property type="entry name" value="Aminomethyltransferase beta-barrel domains"/>
    <property type="match status" value="1"/>
</dbReference>
<dbReference type="Gene3D" id="3.30.70.1400">
    <property type="entry name" value="Aminomethyltransferase beta-barrel domains"/>
    <property type="match status" value="1"/>
</dbReference>
<dbReference type="Gene3D" id="4.10.1250.10">
    <property type="entry name" value="Aminomethyltransferase fragment"/>
    <property type="match status" value="1"/>
</dbReference>
<dbReference type="Gene3D" id="3.30.1360.120">
    <property type="entry name" value="Probable tRNA modification gtpase trme, domain 1"/>
    <property type="match status" value="1"/>
</dbReference>
<dbReference type="HAMAP" id="MF_00259">
    <property type="entry name" value="GcvT"/>
    <property type="match status" value="1"/>
</dbReference>
<dbReference type="InterPro" id="IPR006223">
    <property type="entry name" value="GCS_T"/>
</dbReference>
<dbReference type="InterPro" id="IPR022903">
    <property type="entry name" value="GCS_T_bac"/>
</dbReference>
<dbReference type="InterPro" id="IPR013977">
    <property type="entry name" value="GCST_C"/>
</dbReference>
<dbReference type="InterPro" id="IPR006222">
    <property type="entry name" value="GCV_T_N"/>
</dbReference>
<dbReference type="InterPro" id="IPR028896">
    <property type="entry name" value="GcvT/YgfZ/DmdA"/>
</dbReference>
<dbReference type="InterPro" id="IPR029043">
    <property type="entry name" value="GcvT/YgfZ_C"/>
</dbReference>
<dbReference type="InterPro" id="IPR027266">
    <property type="entry name" value="TrmE/GcvT_dom1"/>
</dbReference>
<dbReference type="NCBIfam" id="TIGR00528">
    <property type="entry name" value="gcvT"/>
    <property type="match status" value="1"/>
</dbReference>
<dbReference type="NCBIfam" id="NF001567">
    <property type="entry name" value="PRK00389.1"/>
    <property type="match status" value="1"/>
</dbReference>
<dbReference type="PANTHER" id="PTHR43757">
    <property type="entry name" value="AMINOMETHYLTRANSFERASE"/>
    <property type="match status" value="1"/>
</dbReference>
<dbReference type="PANTHER" id="PTHR43757:SF2">
    <property type="entry name" value="AMINOMETHYLTRANSFERASE, MITOCHONDRIAL"/>
    <property type="match status" value="1"/>
</dbReference>
<dbReference type="Pfam" id="PF01571">
    <property type="entry name" value="GCV_T"/>
    <property type="match status" value="1"/>
</dbReference>
<dbReference type="Pfam" id="PF08669">
    <property type="entry name" value="GCV_T_C"/>
    <property type="match status" value="1"/>
</dbReference>
<dbReference type="PIRSF" id="PIRSF006487">
    <property type="entry name" value="GcvT"/>
    <property type="match status" value="1"/>
</dbReference>
<dbReference type="SUPFAM" id="SSF101790">
    <property type="entry name" value="Aminomethyltransferase beta-barrel domain"/>
    <property type="match status" value="1"/>
</dbReference>
<dbReference type="SUPFAM" id="SSF103025">
    <property type="entry name" value="Folate-binding domain"/>
    <property type="match status" value="1"/>
</dbReference>
<evidence type="ECO:0000255" key="1">
    <source>
        <dbReference type="HAMAP-Rule" id="MF_00259"/>
    </source>
</evidence>
<reference key="1">
    <citation type="journal article" date="2006" name="Proc. Natl. Acad. Sci. U.S.A.">
        <title>Identification of genes subject to positive selection in uropathogenic strains of Escherichia coli: a comparative genomics approach.</title>
        <authorList>
            <person name="Chen S.L."/>
            <person name="Hung C.-S."/>
            <person name="Xu J."/>
            <person name="Reigstad C.S."/>
            <person name="Magrini V."/>
            <person name="Sabo A."/>
            <person name="Blasiar D."/>
            <person name="Bieri T."/>
            <person name="Meyer R.R."/>
            <person name="Ozersky P."/>
            <person name="Armstrong J.R."/>
            <person name="Fulton R.S."/>
            <person name="Latreille J.P."/>
            <person name="Spieth J."/>
            <person name="Hooton T.M."/>
            <person name="Mardis E.R."/>
            <person name="Hultgren S.J."/>
            <person name="Gordon J.I."/>
        </authorList>
    </citation>
    <scope>NUCLEOTIDE SEQUENCE [LARGE SCALE GENOMIC DNA]</scope>
    <source>
        <strain>UTI89 / UPEC</strain>
    </source>
</reference>
<organism>
    <name type="scientific">Escherichia coli (strain UTI89 / UPEC)</name>
    <dbReference type="NCBI Taxonomy" id="364106"/>
    <lineage>
        <taxon>Bacteria</taxon>
        <taxon>Pseudomonadati</taxon>
        <taxon>Pseudomonadota</taxon>
        <taxon>Gammaproteobacteria</taxon>
        <taxon>Enterobacterales</taxon>
        <taxon>Enterobacteriaceae</taxon>
        <taxon>Escherichia</taxon>
    </lineage>
</organism>
<feature type="chain" id="PRO_1000047662" description="Aminomethyltransferase">
    <location>
        <begin position="1"/>
        <end position="364"/>
    </location>
</feature>
<protein>
    <recommendedName>
        <fullName evidence="1">Aminomethyltransferase</fullName>
        <ecNumber evidence="1">2.1.2.10</ecNumber>
    </recommendedName>
    <alternativeName>
        <fullName evidence="1">Glycine cleavage system T protein</fullName>
    </alternativeName>
</protein>
<sequence length="364" mass="40149">MAQQTPLYEQHTLCGARMVDFHGWMMPLHYGSQIDEHHAVRTDAGMFDVSHMTIVDLRGSRTREFLRYLLANDVAKLTKSGKALYSGMLNASGGVIDDLIVYYFTEDFFRLVVNSATREKDLSWITQHAEPFGIEITVRDDLSMIAVQGPNAQAKAATLFNDAQRQAVEGMKPFFGVQAGDLFIATTGYTGEAGYEIALPNEKAADFWRALVEAGVKPCGLGARDTLRLEAGMNLYSQEMDETISPLAANMGWTIAWEPADRDFIGREALEAQREHGTEKLVGLVMTEKGVLRNELPVRFTDAQGNQHEGIITSGTFSPTLGYSIALARVPEGIGETAIVQIRNREMPVKVTKPVFVRNGKAVA</sequence>
<name>GCST_ECOUT</name>
<keyword id="KW-0032">Aminotransferase</keyword>
<keyword id="KW-0808">Transferase</keyword>
<comment type="function">
    <text evidence="1">The glycine cleavage system catalyzes the degradation of glycine.</text>
</comment>
<comment type="catalytic activity">
    <reaction evidence="1">
        <text>N(6)-[(R)-S(8)-aminomethyldihydrolipoyl]-L-lysyl-[protein] + (6S)-5,6,7,8-tetrahydrofolate = N(6)-[(R)-dihydrolipoyl]-L-lysyl-[protein] + (6R)-5,10-methylene-5,6,7,8-tetrahydrofolate + NH4(+)</text>
        <dbReference type="Rhea" id="RHEA:16945"/>
        <dbReference type="Rhea" id="RHEA-COMP:10475"/>
        <dbReference type="Rhea" id="RHEA-COMP:10492"/>
        <dbReference type="ChEBI" id="CHEBI:15636"/>
        <dbReference type="ChEBI" id="CHEBI:28938"/>
        <dbReference type="ChEBI" id="CHEBI:57453"/>
        <dbReference type="ChEBI" id="CHEBI:83100"/>
        <dbReference type="ChEBI" id="CHEBI:83143"/>
        <dbReference type="EC" id="2.1.2.10"/>
    </reaction>
</comment>
<comment type="subunit">
    <text evidence="1">The glycine cleavage system is composed of four proteins: P, T, L and H.</text>
</comment>
<comment type="similarity">
    <text evidence="1">Belongs to the GcvT family.</text>
</comment>
<gene>
    <name evidence="1" type="primary">gcvT</name>
    <name type="ordered locus">UTI89_C3290</name>
</gene>
<proteinExistence type="inferred from homology"/>